<comment type="catalytic activity">
    <reaction evidence="1">
        <text>urea + 2 H2O + H(+) = hydrogencarbonate + 2 NH4(+)</text>
        <dbReference type="Rhea" id="RHEA:20557"/>
        <dbReference type="ChEBI" id="CHEBI:15377"/>
        <dbReference type="ChEBI" id="CHEBI:15378"/>
        <dbReference type="ChEBI" id="CHEBI:16199"/>
        <dbReference type="ChEBI" id="CHEBI:17544"/>
        <dbReference type="ChEBI" id="CHEBI:28938"/>
        <dbReference type="EC" id="3.5.1.5"/>
    </reaction>
</comment>
<comment type="pathway">
    <text evidence="1">Nitrogen metabolism; urea degradation; CO(2) and NH(3) from urea (urease route): step 1/1.</text>
</comment>
<comment type="subunit">
    <text evidence="1">Heterohexamer of 3 UreA (alpha) and 3 UreB (beta) subunits.</text>
</comment>
<comment type="subcellular location">
    <subcellularLocation>
        <location evidence="1">Cytoplasm</location>
    </subcellularLocation>
</comment>
<comment type="similarity">
    <text evidence="1">In the N-terminal section; belongs to the urease gamma subunit family.</text>
</comment>
<comment type="similarity">
    <text evidence="1">In the C-terminal section; belongs to the urease beta subunit family.</text>
</comment>
<comment type="caution">
    <text evidence="2">The orthologous protein is known as the gamma/beta subunit (UreAB) in most other bacteria.</text>
</comment>
<dbReference type="EC" id="3.5.1.5" evidence="1"/>
<dbReference type="EMBL" id="CP001217">
    <property type="protein sequence ID" value="ACJ07237.1"/>
    <property type="molecule type" value="Genomic_DNA"/>
</dbReference>
<dbReference type="SMR" id="B6JPH6"/>
<dbReference type="KEGG" id="hpp:HPP12_0077"/>
<dbReference type="HOGENOM" id="CLU_000980_3_0_7"/>
<dbReference type="UniPathway" id="UPA00258">
    <property type="reaction ID" value="UER00370"/>
</dbReference>
<dbReference type="Proteomes" id="UP000008198">
    <property type="component" value="Chromosome"/>
</dbReference>
<dbReference type="GO" id="GO:0035550">
    <property type="term" value="C:urease complex"/>
    <property type="evidence" value="ECO:0007669"/>
    <property type="project" value="InterPro"/>
</dbReference>
<dbReference type="GO" id="GO:0016151">
    <property type="term" value="F:nickel cation binding"/>
    <property type="evidence" value="ECO:0007669"/>
    <property type="project" value="InterPro"/>
</dbReference>
<dbReference type="GO" id="GO:0009039">
    <property type="term" value="F:urease activity"/>
    <property type="evidence" value="ECO:0007669"/>
    <property type="project" value="UniProtKB-UniRule"/>
</dbReference>
<dbReference type="GO" id="GO:0043419">
    <property type="term" value="P:urea catabolic process"/>
    <property type="evidence" value="ECO:0007669"/>
    <property type="project" value="UniProtKB-UniRule"/>
</dbReference>
<dbReference type="CDD" id="cd00407">
    <property type="entry name" value="Urease_beta"/>
    <property type="match status" value="1"/>
</dbReference>
<dbReference type="CDD" id="cd00390">
    <property type="entry name" value="Urease_gamma"/>
    <property type="match status" value="1"/>
</dbReference>
<dbReference type="FunFam" id="3.30.280.10:FF:000001">
    <property type="entry name" value="Urease subunit alpha"/>
    <property type="match status" value="1"/>
</dbReference>
<dbReference type="FunFam" id="2.10.150.10:FF:000001">
    <property type="entry name" value="Urease subunit beta"/>
    <property type="match status" value="1"/>
</dbReference>
<dbReference type="Gene3D" id="2.10.150.10">
    <property type="entry name" value="Urease, beta subunit"/>
    <property type="match status" value="1"/>
</dbReference>
<dbReference type="Gene3D" id="3.30.280.10">
    <property type="entry name" value="Urease, gamma-like subunit"/>
    <property type="match status" value="1"/>
</dbReference>
<dbReference type="HAMAP" id="MF_01954">
    <property type="entry name" value="Urease_beta"/>
    <property type="match status" value="1"/>
</dbReference>
<dbReference type="HAMAP" id="MF_01955">
    <property type="entry name" value="Urease_beta_gamma"/>
    <property type="match status" value="1"/>
</dbReference>
<dbReference type="InterPro" id="IPR002019">
    <property type="entry name" value="Urease_beta-like"/>
</dbReference>
<dbReference type="InterPro" id="IPR036461">
    <property type="entry name" value="Urease_betasu_sf"/>
</dbReference>
<dbReference type="InterPro" id="IPR008223">
    <property type="entry name" value="Urease_gamma-beta_su"/>
</dbReference>
<dbReference type="InterPro" id="IPR002026">
    <property type="entry name" value="Urease_gamma/gamma-beta_su"/>
</dbReference>
<dbReference type="InterPro" id="IPR036463">
    <property type="entry name" value="Urease_gamma_sf"/>
</dbReference>
<dbReference type="InterPro" id="IPR050069">
    <property type="entry name" value="Urease_subunit"/>
</dbReference>
<dbReference type="NCBIfam" id="NF009671">
    <property type="entry name" value="PRK13192.1"/>
    <property type="match status" value="1"/>
</dbReference>
<dbReference type="NCBIfam" id="NF009682">
    <property type="entry name" value="PRK13203.1"/>
    <property type="match status" value="1"/>
</dbReference>
<dbReference type="NCBIfam" id="NF009712">
    <property type="entry name" value="PRK13241.1"/>
    <property type="match status" value="1"/>
</dbReference>
<dbReference type="NCBIfam" id="NF010592">
    <property type="entry name" value="PRK13986.1"/>
    <property type="match status" value="1"/>
</dbReference>
<dbReference type="NCBIfam" id="TIGR00192">
    <property type="entry name" value="urease_beta"/>
    <property type="match status" value="1"/>
</dbReference>
<dbReference type="NCBIfam" id="TIGR00193">
    <property type="entry name" value="urease_gam"/>
    <property type="match status" value="1"/>
</dbReference>
<dbReference type="PANTHER" id="PTHR33569">
    <property type="entry name" value="UREASE"/>
    <property type="match status" value="1"/>
</dbReference>
<dbReference type="PANTHER" id="PTHR33569:SF1">
    <property type="entry name" value="UREASE"/>
    <property type="match status" value="1"/>
</dbReference>
<dbReference type="Pfam" id="PF00699">
    <property type="entry name" value="Urease_beta"/>
    <property type="match status" value="1"/>
</dbReference>
<dbReference type="Pfam" id="PF00547">
    <property type="entry name" value="Urease_gamma"/>
    <property type="match status" value="1"/>
</dbReference>
<dbReference type="PIRSF" id="PIRSF001225">
    <property type="entry name" value="Urease_gammabeta"/>
    <property type="match status" value="1"/>
</dbReference>
<dbReference type="SUPFAM" id="SSF51278">
    <property type="entry name" value="Urease, beta-subunit"/>
    <property type="match status" value="1"/>
</dbReference>
<dbReference type="SUPFAM" id="SSF54111">
    <property type="entry name" value="Urease, gamma-subunit"/>
    <property type="match status" value="1"/>
</dbReference>
<evidence type="ECO:0000255" key="1">
    <source>
        <dbReference type="HAMAP-Rule" id="MF_01955"/>
    </source>
</evidence>
<evidence type="ECO:0000305" key="2"/>
<keyword id="KW-0963">Cytoplasm</keyword>
<keyword id="KW-0378">Hydrolase</keyword>
<reference key="1">
    <citation type="submission" date="2008-10" db="EMBL/GenBank/DDBJ databases">
        <title>The complete genome sequence of Helicobacter pylori strain P12.</title>
        <authorList>
            <person name="Fischer W."/>
            <person name="Windhager L."/>
            <person name="Karnholz A."/>
            <person name="Zeiller M."/>
            <person name="Zimmer R."/>
            <person name="Haas R."/>
        </authorList>
    </citation>
    <scope>NUCLEOTIDE SEQUENCE [LARGE SCALE GENOMIC DNA]</scope>
    <source>
        <strain>P12</strain>
    </source>
</reference>
<feature type="chain" id="PRO_1000188948" description="Urease subunit alpha">
    <location>
        <begin position="1"/>
        <end position="238"/>
    </location>
</feature>
<feature type="region of interest" description="Urease gamma">
    <location>
        <begin position="1"/>
        <end position="102"/>
    </location>
</feature>
<feature type="region of interest" description="Urease beta">
    <location>
        <begin position="103"/>
        <end position="238"/>
    </location>
</feature>
<sequence>MKLTPKELDKLMLHYAGELAKKRKEKGIKLNYVEAVALISAHIMEEARAGKKTAAELMQEGRTLLKPDDVMDGVASMIHEVGIEAMFPDGTKLVTVHTPIEANGKLVPGELFLKNEDITINEGKKAVSVKVKNVGDRPVQIGSHFHFFEVNRCLDFDREKTFGKRLDIASGTAVRFEPGEEKSVELIDIGGNRRIFGFNALVDRQADNESKKIALHRAKERGFHGAKSDDNYVKTIKE</sequence>
<gene>
    <name evidence="1" type="primary">ureA</name>
    <name type="ordered locus">HPP12_0077</name>
</gene>
<accession>B6JPH6</accession>
<proteinExistence type="inferred from homology"/>
<protein>
    <recommendedName>
        <fullName evidence="1">Urease subunit alpha</fullName>
        <ecNumber evidence="1">3.5.1.5</ecNumber>
    </recommendedName>
    <alternativeName>
        <fullName evidence="1">Urea amidohydrolase subunit alpha</fullName>
    </alternativeName>
</protein>
<name>URE23_HELP2</name>
<organism>
    <name type="scientific">Helicobacter pylori (strain P12)</name>
    <dbReference type="NCBI Taxonomy" id="570508"/>
    <lineage>
        <taxon>Bacteria</taxon>
        <taxon>Pseudomonadati</taxon>
        <taxon>Campylobacterota</taxon>
        <taxon>Epsilonproteobacteria</taxon>
        <taxon>Campylobacterales</taxon>
        <taxon>Helicobacteraceae</taxon>
        <taxon>Helicobacter</taxon>
    </lineage>
</organism>